<protein>
    <recommendedName>
        <fullName evidence="1">Tol-Pal system protein TolB</fullName>
    </recommendedName>
</protein>
<proteinExistence type="inferred from homology"/>
<comment type="function">
    <text evidence="1">Part of the Tol-Pal system, which plays a role in outer membrane invagination during cell division and is important for maintaining outer membrane integrity.</text>
</comment>
<comment type="subunit">
    <text evidence="1">The Tol-Pal system is composed of five core proteins: the inner membrane proteins TolA, TolQ and TolR, the periplasmic protein TolB and the outer membrane protein Pal. They form a network linking the inner and outer membranes and the peptidoglycan layer.</text>
</comment>
<comment type="subcellular location">
    <subcellularLocation>
        <location evidence="1">Periplasm</location>
    </subcellularLocation>
</comment>
<comment type="similarity">
    <text evidence="2">Belongs to the TolB family.</text>
</comment>
<accession>Q44156</accession>
<dbReference type="EMBL" id="X89009">
    <property type="protein sequence ID" value="CAA61412.1"/>
    <property type="molecule type" value="Genomic_DNA"/>
</dbReference>
<dbReference type="SMR" id="Q44156"/>
<dbReference type="GO" id="GO:0042597">
    <property type="term" value="C:periplasmic space"/>
    <property type="evidence" value="ECO:0007669"/>
    <property type="project" value="UniProtKB-SubCell"/>
</dbReference>
<dbReference type="GO" id="GO:0051301">
    <property type="term" value="P:cell division"/>
    <property type="evidence" value="ECO:0007669"/>
    <property type="project" value="UniProtKB-KW"/>
</dbReference>
<dbReference type="Gene3D" id="2.120.10.30">
    <property type="entry name" value="TolB, C-terminal domain"/>
    <property type="match status" value="1"/>
</dbReference>
<dbReference type="InterPro" id="IPR011042">
    <property type="entry name" value="6-blade_b-propeller_TolB-like"/>
</dbReference>
<dbReference type="InterPro" id="IPR011659">
    <property type="entry name" value="PD40"/>
</dbReference>
<dbReference type="Pfam" id="PF07676">
    <property type="entry name" value="PD40"/>
    <property type="match status" value="1"/>
</dbReference>
<dbReference type="SUPFAM" id="SSF50960">
    <property type="entry name" value="TolB, C-terminal domain"/>
    <property type="match status" value="1"/>
</dbReference>
<gene>
    <name type="primary">tolB</name>
</gene>
<keyword id="KW-0131">Cell cycle</keyword>
<keyword id="KW-0132">Cell division</keyword>
<keyword id="KW-0574">Periplasm</keyword>
<sequence>CIKQILQIITILPDLASGGTEVLSSTFLDESPSISPNGIMVIYSSTKGTSKVLQLVSADGRFKANLPGAGGQFKFPAWSPYLTK</sequence>
<evidence type="ECO:0000250" key="1">
    <source>
        <dbReference type="UniProtKB" id="P0A855"/>
    </source>
</evidence>
<evidence type="ECO:0000305" key="2"/>
<reference key="1">
    <citation type="journal article" date="1996" name="Res. Microbiol.">
        <title>Cloning and characterization of an Actinobacillus pleuropneumoniae outer membrane protein belonging to the family of PAL lipoproteins.</title>
        <authorList>
            <person name="Frey J."/>
            <person name="Kuhnert P."/>
            <person name="Villiger L."/>
            <person name="Nicolet J."/>
        </authorList>
    </citation>
    <scope>NUCLEOTIDE SEQUENCE [GENOMIC DNA]</scope>
    <source>
        <strain>1536 / Serotype 2</strain>
    </source>
</reference>
<organism>
    <name type="scientific">Actinobacillus pleuropneumoniae</name>
    <name type="common">Haemophilus pleuropneumoniae</name>
    <dbReference type="NCBI Taxonomy" id="715"/>
    <lineage>
        <taxon>Bacteria</taxon>
        <taxon>Pseudomonadati</taxon>
        <taxon>Pseudomonadota</taxon>
        <taxon>Gammaproteobacteria</taxon>
        <taxon>Pasteurellales</taxon>
        <taxon>Pasteurellaceae</taxon>
        <taxon>Actinobacillus</taxon>
    </lineage>
</organism>
<feature type="chain" id="PRO_0000206088" description="Tol-Pal system protein TolB">
    <location>
        <begin position="1" status="less than"/>
        <end position="84"/>
    </location>
</feature>
<feature type="non-terminal residue">
    <location>
        <position position="1"/>
    </location>
</feature>
<name>TOLB_ACTPL</name>